<sequence>MAPISVILVTDHKLPEAMSTTREKLLATTSKFVSTFGSFDVDEILAIRTPTCLYHQCCPSFNKNVVTNEETRANFPQFIATFRRFDFSILEPDHTLVDEASRRVMIRAKASAESIVGAYENEYIFILKMTEDCRLVDEIYEFYDTIRLKDLQHRLEAKHISYGDTAPFETRTTQF</sequence>
<protein>
    <recommendedName>
        <fullName evidence="6">Austinoid biosynthesis cluster protein F</fullName>
    </recommendedName>
</protein>
<feature type="chain" id="PRO_0000453828" description="Austinoid biosynthesis cluster protein F">
    <location>
        <begin position="1"/>
        <end position="175"/>
    </location>
</feature>
<accession>A0A0U5HAP0</accession>
<evidence type="ECO:0000250" key="1">
    <source>
        <dbReference type="UniProtKB" id="Q5AR31"/>
    </source>
</evidence>
<evidence type="ECO:0000250" key="2">
    <source>
        <dbReference type="UniProtKB" id="Q5AR33"/>
    </source>
</evidence>
<evidence type="ECO:0000250" key="3">
    <source>
        <dbReference type="UniProtKB" id="Q5ATJ7"/>
    </source>
</evidence>
<evidence type="ECO:0000269" key="4">
    <source>
    </source>
</evidence>
<evidence type="ECO:0000269" key="5">
    <source>
    </source>
</evidence>
<evidence type="ECO:0000303" key="6">
    <source>
    </source>
</evidence>
<evidence type="ECO:0000305" key="7"/>
<evidence type="ECO:0000305" key="8">
    <source>
    </source>
</evidence>
<evidence type="ECO:0000305" key="9">
    <source>
    </source>
</evidence>
<comment type="function">
    <text evidence="2 3 4 5">Part of the gene cluster that mediates the biosynthesis of calidodehydroaustin, a fungal meroterpenoid (PubMed:28233494, PubMed:29076725). The first step of the pathway is the synthesis of 3,5-dimethylorsellinic acid by the polyketide synthase ausA (PubMed:28233494). 3,5-dimethylorsellinic acid is then prenylated by the polyprenyl transferase ausN (PubMed:28233494). Further epoxidation by the FAD-dependent monooxygenase ausM and cyclization by the probable terpene cyclase ausL lead to the formation of protoaustinoid A (By similarity). Protoaustinoid A is then oxidized to spiro-lactone preaustinoid A3 by the combined action of the FAD-binding monooxygenases ausB and ausC, and the dioxygenase ausE (By similarity). Acid-catalyzed keto-rearrangement and ring contraction of the tetraketide portion of preaustinoid A3 by ausJ lead to the formation of preaustinoid A4 (By similarity). The aldo-keto reductase ausK, with the help of ausH, is involved in the next step by transforming preaustinoid A4 into isoaustinone which is in turn hydroxylated by the P450 monooxygenase ausI to form austinolide (By similarity). The cytochrome P450 monooxygenase ausG modifies austinolide to austinol (By similarity). Austinol is further acetylated to austin by the O-acetyltransferase ausP, which spontaneously changes to dehydroaustin (PubMed:28233494). The cytochrome P450 monooxygenase ausR then converts dehydroaustin is into 7-dehydrodehydroaustin (PubMed:28233494). The hydroxylation catalyzed by ausR permits the O-acetyltransferase ausQ to add an additional acetyl group to the molecule, leading to the formation of acetoxydehydroaustin (PubMed:28233494). The short chain dehydrogenase ausT catalyzes the reduction of the double bond present between carbon atoms 1 and 2 to convert 7-dehydrodehydroaustin into 1,2-dihydro-7-hydroxydehydroaustin (PubMed:28233494). AusQ catalyzes not only an acetylation reaction but also the addition of the PKS ausV diketide product to 1,2-dihydro-7-hydroxydehydroaustin, forming precalidodehydroaustin (PubMed:28233494). Finally, the iron/alpha-ketoglutarate-dependent dioxygenase converts precalidodehydroaustin into calidodehydroaustin (PubMed:28233494).</text>
</comment>
<comment type="pathway">
    <text evidence="8">Secondary metabolite biosynthesis; terpenoid biosynthesis.</text>
</comment>
<comment type="subunit">
    <text evidence="1">Homodimer.</text>
</comment>
<comment type="miscellaneous">
    <text evidence="9">In A.calidoustus, the austinoid gene cluster lies on a contiguous DNA region, while clusters from E.nidulans and P.brasilianum are split in their respective genomes. Genetic rearrangements provoked variability among the clusters and E.nidulans produces the least number of austionoid derivatives with the end products austinol and dehydroaustinol, while P.brasilianum can produce until acetoxydehydroaustin, and A.calidoustus produces the highest number of identified derivatives.</text>
</comment>
<comment type="similarity">
    <text evidence="7">Belongs to the trt14 isomerase family.</text>
</comment>
<name>AUSF_ASPCI</name>
<keyword id="KW-1185">Reference proteome</keyword>
<dbReference type="EMBL" id="CDMC01000024">
    <property type="protein sequence ID" value="CEL11252.1"/>
    <property type="molecule type" value="Genomic_DNA"/>
</dbReference>
<dbReference type="SMR" id="A0A0U5HAP0"/>
<dbReference type="STRING" id="454130.A0A0U5HAP0"/>
<dbReference type="OMA" id="KHISYGD"/>
<dbReference type="OrthoDB" id="3758478at2759"/>
<dbReference type="UniPathway" id="UPA00213"/>
<dbReference type="Proteomes" id="UP000054771">
    <property type="component" value="Unassembled WGS sequence"/>
</dbReference>
<dbReference type="GO" id="GO:0016114">
    <property type="term" value="P:terpenoid biosynthetic process"/>
    <property type="evidence" value="ECO:0007669"/>
    <property type="project" value="UniProtKB-UniPathway"/>
</dbReference>
<dbReference type="Gene3D" id="3.10.450.50">
    <property type="match status" value="1"/>
</dbReference>
<dbReference type="InterPro" id="IPR050977">
    <property type="entry name" value="Fungal_Meroterpenoid_Isomerase"/>
</dbReference>
<dbReference type="InterPro" id="IPR032710">
    <property type="entry name" value="NTF2-like_dom_sf"/>
</dbReference>
<dbReference type="PANTHER" id="PTHR39598:SF1">
    <property type="entry name" value="AUSTINOID BIOSYNTHESIS CLUSTERS PROTEIN F-RELATED"/>
    <property type="match status" value="1"/>
</dbReference>
<dbReference type="PANTHER" id="PTHR39598">
    <property type="entry name" value="AUSTINOL SYNTHESIS PROTEIN F-RELATED"/>
    <property type="match status" value="1"/>
</dbReference>
<dbReference type="SUPFAM" id="SSF54427">
    <property type="entry name" value="NTF2-like"/>
    <property type="match status" value="1"/>
</dbReference>
<reference key="1">
    <citation type="journal article" date="2016" name="Genome Announc.">
        <title>Draft genome sequences of fungus Aspergillus calidoustus.</title>
        <authorList>
            <person name="Horn F."/>
            <person name="Linde J."/>
            <person name="Mattern D.J."/>
            <person name="Walther G."/>
            <person name="Guthke R."/>
            <person name="Scherlach K."/>
            <person name="Martin K."/>
            <person name="Brakhage A.A."/>
            <person name="Petzke L."/>
            <person name="Valiante V."/>
        </authorList>
    </citation>
    <scope>NUCLEOTIDE SEQUENCE [LARGE SCALE GENOMIC DNA]</scope>
    <source>
        <strain>SF006504</strain>
    </source>
</reference>
<reference key="2">
    <citation type="journal article" date="2017" name="ACS Chem. Biol.">
        <title>Discovery of an Extended Austinoid Biosynthetic Pathway in Aspergillus calidoustus.</title>
        <authorList>
            <person name="Valiante V."/>
            <person name="Mattern D.J."/>
            <person name="Schueffler A."/>
            <person name="Horn F."/>
            <person name="Walther G."/>
            <person name="Scherlach K."/>
            <person name="Petzke L."/>
            <person name="Dickhaut J."/>
            <person name="Guthke R."/>
            <person name="Hertweck C."/>
            <person name="Nett M."/>
            <person name="Thines E."/>
            <person name="Brakhage A.A."/>
        </authorList>
    </citation>
    <scope>FUNCTION</scope>
    <scope>PATHWAY</scope>
</reference>
<reference key="3">
    <citation type="journal article" date="2017" name="ACS Chem. Biol.">
        <title>Rewiring of the austinoid biosynthetic pathway in filamentous fungi.</title>
        <authorList>
            <person name="Mattern D.J."/>
            <person name="Valiante V."/>
            <person name="Horn F."/>
            <person name="Petzke L."/>
            <person name="Brakhage A.A."/>
        </authorList>
    </citation>
    <scope>FUNCTION</scope>
</reference>
<gene>
    <name evidence="6" type="primary">ausF</name>
    <name type="ORF">ASPCAL14355</name>
</gene>
<proteinExistence type="inferred from homology"/>
<organism>
    <name type="scientific">Aspergillus calidoustus</name>
    <dbReference type="NCBI Taxonomy" id="454130"/>
    <lineage>
        <taxon>Eukaryota</taxon>
        <taxon>Fungi</taxon>
        <taxon>Dikarya</taxon>
        <taxon>Ascomycota</taxon>
        <taxon>Pezizomycotina</taxon>
        <taxon>Eurotiomycetes</taxon>
        <taxon>Eurotiomycetidae</taxon>
        <taxon>Eurotiales</taxon>
        <taxon>Aspergillaceae</taxon>
        <taxon>Aspergillus</taxon>
        <taxon>Aspergillus subgen. Nidulantes</taxon>
    </lineage>
</organism>